<reference key="1">
    <citation type="journal article" date="2011" name="Stand. Genomic Sci.">
        <title>Complete genome sequence of Rhodospirillum rubrum type strain (S1).</title>
        <authorList>
            <person name="Munk A.C."/>
            <person name="Copeland A."/>
            <person name="Lucas S."/>
            <person name="Lapidus A."/>
            <person name="Del Rio T.G."/>
            <person name="Barry K."/>
            <person name="Detter J.C."/>
            <person name="Hammon N."/>
            <person name="Israni S."/>
            <person name="Pitluck S."/>
            <person name="Brettin T."/>
            <person name="Bruce D."/>
            <person name="Han C."/>
            <person name="Tapia R."/>
            <person name="Gilna P."/>
            <person name="Schmutz J."/>
            <person name="Larimer F."/>
            <person name="Land M."/>
            <person name="Kyrpides N.C."/>
            <person name="Mavromatis K."/>
            <person name="Richardson P."/>
            <person name="Rohde M."/>
            <person name="Goeker M."/>
            <person name="Klenk H.P."/>
            <person name="Zhang Y."/>
            <person name="Roberts G.P."/>
            <person name="Reslewic S."/>
            <person name="Schwartz D.C."/>
        </authorList>
    </citation>
    <scope>NUCLEOTIDE SEQUENCE [LARGE SCALE GENOMIC DNA]</scope>
    <source>
        <strain>ATCC 11170 / ATH 1.1.1 / DSM 467 / LMG 4362 / NCIMB 8255 / S1</strain>
    </source>
</reference>
<comment type="function">
    <text evidence="1">Binds the lower part of the 30S subunit head. Binds mRNA in the 70S ribosome, positioning it for translation.</text>
</comment>
<comment type="subunit">
    <text evidence="1">Part of the 30S ribosomal subunit. Forms a tight complex with proteins S10 and S14.</text>
</comment>
<comment type="similarity">
    <text evidence="1">Belongs to the universal ribosomal protein uS3 family.</text>
</comment>
<sequence>MGQKVNPIGLRLGINRTWDSRWFAGRDYASLLHQDLAIKKYLKSKLAQAGVSRIVIERPAKKARITIHTARPGVVIGKKGQDIENLRKKLQVMTGNEVHLNIVEIRKPELDAQLVAENIAQQLERRVAFRRAMKRAVQSAMRLGALGIRINCGGRLGGAEIARTEWYREGRVPLHTLRADVDYGTAAAHTTYGVCGVKVWVFKGEIMEHDPMAQDKRSQDQGR</sequence>
<name>RS3_RHORT</name>
<evidence type="ECO:0000255" key="1">
    <source>
        <dbReference type="HAMAP-Rule" id="MF_01309"/>
    </source>
</evidence>
<evidence type="ECO:0000305" key="2"/>
<proteinExistence type="inferred from homology"/>
<organism>
    <name type="scientific">Rhodospirillum rubrum (strain ATCC 11170 / ATH 1.1.1 / DSM 467 / LMG 4362 / NCIMB 8255 / S1)</name>
    <dbReference type="NCBI Taxonomy" id="269796"/>
    <lineage>
        <taxon>Bacteria</taxon>
        <taxon>Pseudomonadati</taxon>
        <taxon>Pseudomonadota</taxon>
        <taxon>Alphaproteobacteria</taxon>
        <taxon>Rhodospirillales</taxon>
        <taxon>Rhodospirillaceae</taxon>
        <taxon>Rhodospirillum</taxon>
    </lineage>
</organism>
<accession>Q2RQW6</accession>
<feature type="chain" id="PRO_0000230723" description="Small ribosomal subunit protein uS3">
    <location>
        <begin position="1"/>
        <end position="223"/>
    </location>
</feature>
<feature type="domain" description="KH type-2" evidence="1">
    <location>
        <begin position="38"/>
        <end position="106"/>
    </location>
</feature>
<protein>
    <recommendedName>
        <fullName evidence="1">Small ribosomal subunit protein uS3</fullName>
    </recommendedName>
    <alternativeName>
        <fullName evidence="2">30S ribosomal protein S3</fullName>
    </alternativeName>
</protein>
<dbReference type="EMBL" id="CP000230">
    <property type="protein sequence ID" value="ABC23479.1"/>
    <property type="molecule type" value="Genomic_DNA"/>
</dbReference>
<dbReference type="RefSeq" id="WP_011390432.1">
    <property type="nucleotide sequence ID" value="NC_007643.1"/>
</dbReference>
<dbReference type="RefSeq" id="YP_427766.1">
    <property type="nucleotide sequence ID" value="NC_007643.1"/>
</dbReference>
<dbReference type="SMR" id="Q2RQW6"/>
<dbReference type="STRING" id="269796.Rru_A2682"/>
<dbReference type="EnsemblBacteria" id="ABC23479">
    <property type="protein sequence ID" value="ABC23479"/>
    <property type="gene ID" value="Rru_A2682"/>
</dbReference>
<dbReference type="KEGG" id="rru:Rru_A2682"/>
<dbReference type="PATRIC" id="fig|269796.9.peg.2789"/>
<dbReference type="eggNOG" id="COG0092">
    <property type="taxonomic scope" value="Bacteria"/>
</dbReference>
<dbReference type="HOGENOM" id="CLU_058591_0_2_5"/>
<dbReference type="PhylomeDB" id="Q2RQW6"/>
<dbReference type="Proteomes" id="UP000001929">
    <property type="component" value="Chromosome"/>
</dbReference>
<dbReference type="GO" id="GO:0022627">
    <property type="term" value="C:cytosolic small ribosomal subunit"/>
    <property type="evidence" value="ECO:0007669"/>
    <property type="project" value="TreeGrafter"/>
</dbReference>
<dbReference type="GO" id="GO:0003729">
    <property type="term" value="F:mRNA binding"/>
    <property type="evidence" value="ECO:0007669"/>
    <property type="project" value="UniProtKB-UniRule"/>
</dbReference>
<dbReference type="GO" id="GO:0019843">
    <property type="term" value="F:rRNA binding"/>
    <property type="evidence" value="ECO:0007669"/>
    <property type="project" value="UniProtKB-UniRule"/>
</dbReference>
<dbReference type="GO" id="GO:0003735">
    <property type="term" value="F:structural constituent of ribosome"/>
    <property type="evidence" value="ECO:0007669"/>
    <property type="project" value="InterPro"/>
</dbReference>
<dbReference type="GO" id="GO:0006412">
    <property type="term" value="P:translation"/>
    <property type="evidence" value="ECO:0007669"/>
    <property type="project" value="UniProtKB-UniRule"/>
</dbReference>
<dbReference type="CDD" id="cd02412">
    <property type="entry name" value="KH-II_30S_S3"/>
    <property type="match status" value="1"/>
</dbReference>
<dbReference type="FunFam" id="3.30.1140.32:FF:000009">
    <property type="entry name" value="30S ribosomal protein S3"/>
    <property type="match status" value="1"/>
</dbReference>
<dbReference type="FunFam" id="3.30.300.20:FF:000001">
    <property type="entry name" value="30S ribosomal protein S3"/>
    <property type="match status" value="1"/>
</dbReference>
<dbReference type="Gene3D" id="3.30.300.20">
    <property type="match status" value="1"/>
</dbReference>
<dbReference type="Gene3D" id="3.30.1140.32">
    <property type="entry name" value="Ribosomal protein S3, C-terminal domain"/>
    <property type="match status" value="1"/>
</dbReference>
<dbReference type="HAMAP" id="MF_01309_B">
    <property type="entry name" value="Ribosomal_uS3_B"/>
    <property type="match status" value="1"/>
</dbReference>
<dbReference type="InterPro" id="IPR004087">
    <property type="entry name" value="KH_dom"/>
</dbReference>
<dbReference type="InterPro" id="IPR015946">
    <property type="entry name" value="KH_dom-like_a/b"/>
</dbReference>
<dbReference type="InterPro" id="IPR004044">
    <property type="entry name" value="KH_dom_type_2"/>
</dbReference>
<dbReference type="InterPro" id="IPR009019">
    <property type="entry name" value="KH_sf_prok-type"/>
</dbReference>
<dbReference type="InterPro" id="IPR036419">
    <property type="entry name" value="Ribosomal_S3_C_sf"/>
</dbReference>
<dbReference type="InterPro" id="IPR005704">
    <property type="entry name" value="Ribosomal_uS3_bac-typ"/>
</dbReference>
<dbReference type="InterPro" id="IPR001351">
    <property type="entry name" value="Ribosomal_uS3_C"/>
</dbReference>
<dbReference type="InterPro" id="IPR018280">
    <property type="entry name" value="Ribosomal_uS3_CS"/>
</dbReference>
<dbReference type="NCBIfam" id="TIGR01009">
    <property type="entry name" value="rpsC_bact"/>
    <property type="match status" value="1"/>
</dbReference>
<dbReference type="PANTHER" id="PTHR11760">
    <property type="entry name" value="30S/40S RIBOSOMAL PROTEIN S3"/>
    <property type="match status" value="1"/>
</dbReference>
<dbReference type="PANTHER" id="PTHR11760:SF19">
    <property type="entry name" value="SMALL RIBOSOMAL SUBUNIT PROTEIN US3C"/>
    <property type="match status" value="1"/>
</dbReference>
<dbReference type="Pfam" id="PF07650">
    <property type="entry name" value="KH_2"/>
    <property type="match status" value="1"/>
</dbReference>
<dbReference type="Pfam" id="PF00189">
    <property type="entry name" value="Ribosomal_S3_C"/>
    <property type="match status" value="1"/>
</dbReference>
<dbReference type="SMART" id="SM00322">
    <property type="entry name" value="KH"/>
    <property type="match status" value="1"/>
</dbReference>
<dbReference type="SUPFAM" id="SSF54814">
    <property type="entry name" value="Prokaryotic type KH domain (KH-domain type II)"/>
    <property type="match status" value="1"/>
</dbReference>
<dbReference type="SUPFAM" id="SSF54821">
    <property type="entry name" value="Ribosomal protein S3 C-terminal domain"/>
    <property type="match status" value="1"/>
</dbReference>
<dbReference type="PROSITE" id="PS50823">
    <property type="entry name" value="KH_TYPE_2"/>
    <property type="match status" value="1"/>
</dbReference>
<dbReference type="PROSITE" id="PS00548">
    <property type="entry name" value="RIBOSOMAL_S3"/>
    <property type="match status" value="1"/>
</dbReference>
<keyword id="KW-1185">Reference proteome</keyword>
<keyword id="KW-0687">Ribonucleoprotein</keyword>
<keyword id="KW-0689">Ribosomal protein</keyword>
<keyword id="KW-0694">RNA-binding</keyword>
<keyword id="KW-0699">rRNA-binding</keyword>
<gene>
    <name evidence="1" type="primary">rpsC</name>
    <name type="ordered locus">Rru_A2682</name>
</gene>